<gene>
    <name evidence="1" type="primary">dapA</name>
    <name type="ordered locus">HPSH_02245</name>
</gene>
<protein>
    <recommendedName>
        <fullName evidence="1">4-hydroxy-tetrahydrodipicolinate synthase</fullName>
        <shortName evidence="1">HTPA synthase</shortName>
        <ecNumber evidence="1">4.3.3.7</ecNumber>
    </recommendedName>
</protein>
<reference key="1">
    <citation type="submission" date="2008-05" db="EMBL/GenBank/DDBJ databases">
        <title>Genome sequence of Helicobacter pylori from the remote Amazon: traces of Asian ancestry of the first Americans.</title>
        <authorList>
            <person name="Kersulyte D."/>
            <person name="Kalia A."/>
            <person name="Gilman R.H."/>
            <person name="Berg D.E."/>
        </authorList>
    </citation>
    <scope>NUCLEOTIDE SEQUENCE [LARGE SCALE GENOMIC DNA]</scope>
    <source>
        <strain>Shi470</strain>
    </source>
</reference>
<feature type="chain" id="PRO_1000124042" description="4-hydroxy-tetrahydrodipicolinate synthase">
    <location>
        <begin position="1"/>
        <end position="300"/>
    </location>
</feature>
<feature type="active site" description="Proton donor/acceptor" evidence="1">
    <location>
        <position position="140"/>
    </location>
</feature>
<feature type="active site" description="Schiff-base intermediate with substrate" evidence="1">
    <location>
        <position position="169"/>
    </location>
</feature>
<feature type="binding site" evidence="1">
    <location>
        <position position="45"/>
    </location>
    <ligand>
        <name>pyruvate</name>
        <dbReference type="ChEBI" id="CHEBI:15361"/>
    </ligand>
</feature>
<feature type="binding site" evidence="1">
    <location>
        <position position="210"/>
    </location>
    <ligand>
        <name>pyruvate</name>
        <dbReference type="ChEBI" id="CHEBI:15361"/>
    </ligand>
</feature>
<feature type="site" description="Part of a proton relay during catalysis" evidence="1">
    <location>
        <position position="44"/>
    </location>
</feature>
<feature type="site" description="Part of a proton relay during catalysis" evidence="1">
    <location>
        <position position="114"/>
    </location>
</feature>
<dbReference type="EC" id="4.3.3.7" evidence="1"/>
<dbReference type="EMBL" id="CP001072">
    <property type="protein sequence ID" value="ACD47899.1"/>
    <property type="molecule type" value="Genomic_DNA"/>
</dbReference>
<dbReference type="RefSeq" id="WP_001159573.1">
    <property type="nucleotide sequence ID" value="NC_010698.2"/>
</dbReference>
<dbReference type="SMR" id="B2USR7"/>
<dbReference type="KEGG" id="hps:HPSH_02245"/>
<dbReference type="HOGENOM" id="CLU_049343_7_0_7"/>
<dbReference type="UniPathway" id="UPA00034">
    <property type="reaction ID" value="UER00017"/>
</dbReference>
<dbReference type="GO" id="GO:0005829">
    <property type="term" value="C:cytosol"/>
    <property type="evidence" value="ECO:0007669"/>
    <property type="project" value="TreeGrafter"/>
</dbReference>
<dbReference type="GO" id="GO:0008840">
    <property type="term" value="F:4-hydroxy-tetrahydrodipicolinate synthase activity"/>
    <property type="evidence" value="ECO:0007669"/>
    <property type="project" value="UniProtKB-UniRule"/>
</dbReference>
<dbReference type="GO" id="GO:0019877">
    <property type="term" value="P:diaminopimelate biosynthetic process"/>
    <property type="evidence" value="ECO:0007669"/>
    <property type="project" value="UniProtKB-UniRule"/>
</dbReference>
<dbReference type="GO" id="GO:0009089">
    <property type="term" value="P:lysine biosynthetic process via diaminopimelate"/>
    <property type="evidence" value="ECO:0007669"/>
    <property type="project" value="UniProtKB-UniRule"/>
</dbReference>
<dbReference type="CDD" id="cd00950">
    <property type="entry name" value="DHDPS"/>
    <property type="match status" value="1"/>
</dbReference>
<dbReference type="Gene3D" id="3.20.20.70">
    <property type="entry name" value="Aldolase class I"/>
    <property type="match status" value="1"/>
</dbReference>
<dbReference type="HAMAP" id="MF_00418">
    <property type="entry name" value="DapA"/>
    <property type="match status" value="1"/>
</dbReference>
<dbReference type="InterPro" id="IPR013785">
    <property type="entry name" value="Aldolase_TIM"/>
</dbReference>
<dbReference type="InterPro" id="IPR005263">
    <property type="entry name" value="DapA"/>
</dbReference>
<dbReference type="InterPro" id="IPR002220">
    <property type="entry name" value="DapA-like"/>
</dbReference>
<dbReference type="InterPro" id="IPR020625">
    <property type="entry name" value="Schiff_base-form_aldolases_AS"/>
</dbReference>
<dbReference type="NCBIfam" id="TIGR00674">
    <property type="entry name" value="dapA"/>
    <property type="match status" value="1"/>
</dbReference>
<dbReference type="PANTHER" id="PTHR12128:SF66">
    <property type="entry name" value="4-HYDROXY-2-OXOGLUTARATE ALDOLASE, MITOCHONDRIAL"/>
    <property type="match status" value="1"/>
</dbReference>
<dbReference type="PANTHER" id="PTHR12128">
    <property type="entry name" value="DIHYDRODIPICOLINATE SYNTHASE"/>
    <property type="match status" value="1"/>
</dbReference>
<dbReference type="Pfam" id="PF00701">
    <property type="entry name" value="DHDPS"/>
    <property type="match status" value="1"/>
</dbReference>
<dbReference type="PIRSF" id="PIRSF001365">
    <property type="entry name" value="DHDPS"/>
    <property type="match status" value="1"/>
</dbReference>
<dbReference type="PRINTS" id="PR00146">
    <property type="entry name" value="DHPICSNTHASE"/>
</dbReference>
<dbReference type="SMART" id="SM01130">
    <property type="entry name" value="DHDPS"/>
    <property type="match status" value="1"/>
</dbReference>
<dbReference type="SUPFAM" id="SSF51569">
    <property type="entry name" value="Aldolase"/>
    <property type="match status" value="1"/>
</dbReference>
<dbReference type="PROSITE" id="PS00666">
    <property type="entry name" value="DHDPS_2"/>
    <property type="match status" value="1"/>
</dbReference>
<keyword id="KW-0028">Amino-acid biosynthesis</keyword>
<keyword id="KW-0963">Cytoplasm</keyword>
<keyword id="KW-0220">Diaminopimelate biosynthesis</keyword>
<keyword id="KW-0456">Lyase</keyword>
<keyword id="KW-0457">Lysine biosynthesis</keyword>
<keyword id="KW-0704">Schiff base</keyword>
<organism>
    <name type="scientific">Helicobacter pylori (strain Shi470)</name>
    <dbReference type="NCBI Taxonomy" id="512562"/>
    <lineage>
        <taxon>Bacteria</taxon>
        <taxon>Pseudomonadati</taxon>
        <taxon>Campylobacterota</taxon>
        <taxon>Epsilonproteobacteria</taxon>
        <taxon>Campylobacterales</taxon>
        <taxon>Helicobacteraceae</taxon>
        <taxon>Helicobacter</taxon>
    </lineage>
</organism>
<evidence type="ECO:0000255" key="1">
    <source>
        <dbReference type="HAMAP-Rule" id="MF_00418"/>
    </source>
</evidence>
<evidence type="ECO:0000305" key="2"/>
<name>DAPA_HELPS</name>
<proteinExistence type="inferred from homology"/>
<accession>B2USR7</accession>
<comment type="function">
    <text evidence="1">Catalyzes the condensation of (S)-aspartate-beta-semialdehyde [(S)-ASA] and pyruvate to 4-hydroxy-tetrahydrodipicolinate (HTPA).</text>
</comment>
<comment type="catalytic activity">
    <reaction evidence="1">
        <text>L-aspartate 4-semialdehyde + pyruvate = (2S,4S)-4-hydroxy-2,3,4,5-tetrahydrodipicolinate + H2O + H(+)</text>
        <dbReference type="Rhea" id="RHEA:34171"/>
        <dbReference type="ChEBI" id="CHEBI:15361"/>
        <dbReference type="ChEBI" id="CHEBI:15377"/>
        <dbReference type="ChEBI" id="CHEBI:15378"/>
        <dbReference type="ChEBI" id="CHEBI:67139"/>
        <dbReference type="ChEBI" id="CHEBI:537519"/>
        <dbReference type="EC" id="4.3.3.7"/>
    </reaction>
</comment>
<comment type="pathway">
    <text evidence="1">Amino-acid biosynthesis; L-lysine biosynthesis via DAP pathway; (S)-tetrahydrodipicolinate from L-aspartate: step 3/4.</text>
</comment>
<comment type="subunit">
    <text evidence="1">Homotetramer; dimer of dimers.</text>
</comment>
<comment type="subcellular location">
    <subcellularLocation>
        <location evidence="1">Cytoplasm</location>
    </subcellularLocation>
</comment>
<comment type="similarity">
    <text evidence="1">Belongs to the DapA family.</text>
</comment>
<comment type="caution">
    <text evidence="2">Was originally thought to be a dihydrodipicolinate synthase (DHDPS), catalyzing the condensation of (S)-aspartate-beta-semialdehyde [(S)-ASA] and pyruvate to dihydrodipicolinate (DHDP). However, it was shown in E.coli that the product of the enzymatic reaction is not dihydrodipicolinate but in fact (4S)-4-hydroxy-2,3,4,5-tetrahydro-(2S)-dipicolinic acid (HTPA), and that the consecutive dehydration reaction leading to DHDP is not spontaneous but catalyzed by DapB.</text>
</comment>
<sequence>MQFHSSSALITPFKKDLSVDEAAYEVLIKRQIFQGMDACVPVGTTGESATLTHKEHMRCIEIAVETCKNTKTPSNSRMKVLAGVGSNATSESLSLAKFAQKIGADAILCVSPYYNRPTQQGLFEHYKTIAQSVEIPVMLYDVPSRTGVSIEVSTALKLFREVPNIKAIKEASGSLKRVTELHYYEKDFKIFSGEDSLNHSIMFSGGCGVISVTGNLMPNLISQMVNCALKLEYQQALEIQNKLFHLHQALFVETNPIPIKMAMHLAGLIENPSYRLPLVVPSKETIKLLEKTLQQYEVIV</sequence>